<gene>
    <name evidence="3" type="primary">MSP2</name>
    <name evidence="7" type="synonym">MSA2</name>
</gene>
<feature type="signal peptide" evidence="4">
    <location>
        <begin position="1"/>
        <end position="20"/>
    </location>
</feature>
<feature type="chain" id="PRO_0000024604" description="Merozoite surface protein 2">
    <location>
        <begin position="21"/>
        <end position="274"/>
    </location>
</feature>
<feature type="propeptide" id="PRO_0000024605" description="Removed in mature form" evidence="1">
    <location>
        <begin position="275"/>
        <end position="300"/>
    </location>
</feature>
<feature type="repeat" description="1; inverted" evidence="6">
    <location>
        <begin position="51"/>
        <end position="58"/>
    </location>
</feature>
<feature type="repeat" description="2" evidence="6">
    <location>
        <begin position="61"/>
        <end position="68"/>
    </location>
</feature>
<feature type="repeat" description="3" evidence="6">
    <location>
        <begin position="69"/>
        <end position="76"/>
    </location>
</feature>
<feature type="repeat" description="4" evidence="6">
    <location>
        <begin position="77"/>
        <end position="84"/>
    </location>
</feature>
<feature type="repeat" description="5" evidence="6">
    <location>
        <begin position="85"/>
        <end position="92"/>
    </location>
</feature>
<feature type="repeat" description="6" evidence="6">
    <location>
        <begin position="93"/>
        <end position="100"/>
    </location>
</feature>
<feature type="repeat" description="7; inverted" evidence="6">
    <location>
        <begin position="103"/>
        <end position="110"/>
    </location>
</feature>
<feature type="region of interest" description="Polymorphic region" evidence="6">
    <location>
        <begin position="44"/>
        <end position="226"/>
    </location>
</feature>
<feature type="region of interest" description="7 X 8 AA tandem repeats of G-S-G-A-G-A-V-A" evidence="6">
    <location>
        <begin position="51"/>
        <end position="74"/>
    </location>
</feature>
<feature type="region of interest" description="Disordered" evidence="5">
    <location>
        <begin position="111"/>
        <end position="261"/>
    </location>
</feature>
<feature type="compositionally biased region" description="Low complexity" evidence="5">
    <location>
        <begin position="124"/>
        <end position="148"/>
    </location>
</feature>
<feature type="compositionally biased region" description="Basic and acidic residues" evidence="5">
    <location>
        <begin position="149"/>
        <end position="165"/>
    </location>
</feature>
<feature type="compositionally biased region" description="Polar residues" evidence="5">
    <location>
        <begin position="167"/>
        <end position="193"/>
    </location>
</feature>
<feature type="compositionally biased region" description="Polar residues" evidence="5">
    <location>
        <begin position="200"/>
        <end position="228"/>
    </location>
</feature>
<feature type="lipid moiety-binding region" description="GPI-anchor amidated asparagine" evidence="1">
    <location>
        <position position="274"/>
    </location>
</feature>
<feature type="glycosylation site" description="N-linked (GlcNAc...) asparagine" evidence="4">
    <location>
        <position position="22"/>
    </location>
</feature>
<feature type="glycosylation site" description="N-linked (GlcNAc...) asparagine" evidence="4">
    <location>
        <position position="36"/>
    </location>
</feature>
<feature type="glycosylation site" description="N-linked (GlcNAc...) asparagine" evidence="4">
    <location>
        <position position="177"/>
    </location>
</feature>
<feature type="glycosylation site" description="N-linked (GlcNAc...) asparagine" evidence="4">
    <location>
        <position position="249"/>
    </location>
</feature>
<feature type="glycosylation site" description="N-linked (GlcNAc...) asparagine" evidence="4">
    <location>
        <position position="273"/>
    </location>
</feature>
<feature type="glycosylation site" description="N-linked (GlcNAc...) asparagine" evidence="4">
    <location>
        <position position="274"/>
    </location>
</feature>
<feature type="disulfide bond" evidence="2">
    <location>
        <begin position="257"/>
        <end position="265"/>
    </location>
</feature>
<dbReference type="EMBL" id="M59768">
    <property type="protein sequence ID" value="AAA29696.1"/>
    <property type="molecule type" value="Genomic_DNA"/>
</dbReference>
<dbReference type="PIR" id="A39112">
    <property type="entry name" value="A39112"/>
</dbReference>
<dbReference type="GlyCosmos" id="Q03645">
    <property type="glycosylation" value="6 sites, No reported glycans"/>
</dbReference>
<dbReference type="GO" id="GO:0005886">
    <property type="term" value="C:plasma membrane"/>
    <property type="evidence" value="ECO:0007669"/>
    <property type="project" value="UniProtKB-SubCell"/>
</dbReference>
<dbReference type="GO" id="GO:0098552">
    <property type="term" value="C:side of membrane"/>
    <property type="evidence" value="ECO:0007669"/>
    <property type="project" value="UniProtKB-KW"/>
</dbReference>
<dbReference type="GO" id="GO:0007155">
    <property type="term" value="P:cell adhesion"/>
    <property type="evidence" value="ECO:0007669"/>
    <property type="project" value="InterPro"/>
</dbReference>
<dbReference type="InterPro" id="IPR001136">
    <property type="entry name" value="MSA2"/>
</dbReference>
<dbReference type="Pfam" id="PF00985">
    <property type="entry name" value="MSA_2"/>
    <property type="match status" value="1"/>
</dbReference>
<dbReference type="PIRSF" id="PIRSF003575">
    <property type="entry name" value="MSA_2"/>
    <property type="match status" value="1"/>
</dbReference>
<keyword id="KW-1003">Cell membrane</keyword>
<keyword id="KW-1015">Disulfide bond</keyword>
<keyword id="KW-0325">Glycoprotein</keyword>
<keyword id="KW-0336">GPI-anchor</keyword>
<keyword id="KW-0449">Lipoprotein</keyword>
<keyword id="KW-0461">Malaria</keyword>
<keyword id="KW-0472">Membrane</keyword>
<keyword id="KW-0477">Merozoite</keyword>
<keyword id="KW-0677">Repeat</keyword>
<keyword id="KW-0732">Signal</keyword>
<accession>Q03645</accession>
<reference key="1">
    <citation type="journal article" date="1991" name="Proc. Natl. Acad. Sci. U.S.A.">
        <title>Structural diversity in the Plasmodium falciparum merozoite surface antigen 2.</title>
        <authorList>
            <person name="Smythe J.A."/>
            <person name="Coppel R.L."/>
            <person name="Day K.P."/>
            <person name="Martin R.K."/>
            <person name="Oduola A.M.J."/>
            <person name="Kemp D.J."/>
            <person name="Anders R.F."/>
        </authorList>
    </citation>
    <scope>NUCLEOTIDE SEQUENCE [GENOMIC DNA]</scope>
    <scope>POLYMORPHISM</scope>
    <scope>REPEATS</scope>
</reference>
<name>MSA2_PLAFZ</name>
<comment type="function">
    <text evidence="3">May play a role in the merozoite attachment to the erythrocyte.</text>
</comment>
<comment type="subcellular location">
    <subcellularLocation>
        <location evidence="3">Cell membrane</location>
        <topology evidence="1">Lipid-anchor</topology>
        <topology evidence="1">GPI-anchor</topology>
    </subcellularLocation>
    <text evidence="3">During host erythrocyte invasion by merozoites, carried into invaded erythrocytes where it is rapidly degraded.</text>
</comment>
<comment type="domain">
    <text evidence="3">The N-terminal region appears to be involved in lipid binding.</text>
</comment>
<comment type="polymorphism">
    <text evidence="6">The sequence varies across Plasmodium strains (PubMed:2000383). All variants share conserved N- and C-terminal regions; however, they belong to two allelic families, represented by 3D7 strain and FC27 strain sequences respectively, distinguished by tandem repeats and dimorphic flanking sequences within the central region of the protein (PubMed:2000383).</text>
</comment>
<evidence type="ECO:0000250" key="1">
    <source>
        <dbReference type="UniProtKB" id="P19260"/>
    </source>
</evidence>
<evidence type="ECO:0000250" key="2">
    <source>
        <dbReference type="UniProtKB" id="P19599"/>
    </source>
</evidence>
<evidence type="ECO:0000250" key="3">
    <source>
        <dbReference type="UniProtKB" id="P50498"/>
    </source>
</evidence>
<evidence type="ECO:0000255" key="4"/>
<evidence type="ECO:0000256" key="5">
    <source>
        <dbReference type="SAM" id="MobiDB-lite"/>
    </source>
</evidence>
<evidence type="ECO:0000269" key="6">
    <source>
    </source>
</evidence>
<evidence type="ECO:0000303" key="7">
    <source>
    </source>
</evidence>
<organism>
    <name type="scientific">Plasmodium falciparum (isolate mad71 / Papua New Guinea)</name>
    <dbReference type="NCBI Taxonomy" id="70154"/>
    <lineage>
        <taxon>Eukaryota</taxon>
        <taxon>Sar</taxon>
        <taxon>Alveolata</taxon>
        <taxon>Apicomplexa</taxon>
        <taxon>Aconoidasida</taxon>
        <taxon>Haemosporida</taxon>
        <taxon>Plasmodiidae</taxon>
        <taxon>Plasmodium</taxon>
        <taxon>Plasmodium (Laverania)</taxon>
    </lineage>
</organism>
<proteinExistence type="inferred from homology"/>
<protein>
    <recommendedName>
        <fullName evidence="3">Merozoite surface protein 2</fullName>
    </recommendedName>
    <alternativeName>
        <fullName evidence="7">Merozoite surface antigen 2</fullName>
        <shortName evidence="7">MSA-2</shortName>
    </alternativeName>
</protein>
<sequence>MKVIKTLSIINFFIFVTFNIKNESKYSNTFINNAYNMSIRRSMEESKPPTGAVAGSGAGAGSGAGAVAGSGAGAVAGSGAGAVAGSGAGAVAGSGAGAVAGSGAVAGSGAGNGANPGADAERGPSTPATTTTTTTTNDAEASTSTSSENRNHNNAETNPKGKGEVQKPNQANKETQNNSNVQQDSQTKSNVPRTQDADTKSPTAQPEQAENSAPTAEQTESPELQSAPENKGTGQHGHMHGSRNNHPQNTSDSQKECTDGNKENCGAATSLLNNSSNIASINKFVVLISATLVLSFAIFI</sequence>